<feature type="chain" id="PRO_1000011592" description="GTPase Der">
    <location>
        <begin position="1"/>
        <end position="463"/>
    </location>
</feature>
<feature type="domain" description="EngA-type G 1">
    <location>
        <begin position="2"/>
        <end position="164"/>
    </location>
</feature>
<feature type="domain" description="EngA-type G 2">
    <location>
        <begin position="198"/>
        <end position="369"/>
    </location>
</feature>
<feature type="domain" description="KH-like" evidence="1">
    <location>
        <begin position="370"/>
        <end position="454"/>
    </location>
</feature>
<feature type="binding site" evidence="1">
    <location>
        <begin position="8"/>
        <end position="15"/>
    </location>
    <ligand>
        <name>GTP</name>
        <dbReference type="ChEBI" id="CHEBI:37565"/>
        <label>1</label>
    </ligand>
</feature>
<feature type="binding site" evidence="1">
    <location>
        <begin position="55"/>
        <end position="59"/>
    </location>
    <ligand>
        <name>GTP</name>
        <dbReference type="ChEBI" id="CHEBI:37565"/>
        <label>1</label>
    </ligand>
</feature>
<feature type="binding site" evidence="1">
    <location>
        <begin position="116"/>
        <end position="119"/>
    </location>
    <ligand>
        <name>GTP</name>
        <dbReference type="ChEBI" id="CHEBI:37565"/>
        <label>1</label>
    </ligand>
</feature>
<feature type="binding site" evidence="1">
    <location>
        <begin position="204"/>
        <end position="211"/>
    </location>
    <ligand>
        <name>GTP</name>
        <dbReference type="ChEBI" id="CHEBI:37565"/>
        <label>2</label>
    </ligand>
</feature>
<feature type="binding site" evidence="1">
    <location>
        <begin position="251"/>
        <end position="255"/>
    </location>
    <ligand>
        <name>GTP</name>
        <dbReference type="ChEBI" id="CHEBI:37565"/>
        <label>2</label>
    </ligand>
</feature>
<feature type="binding site" evidence="1">
    <location>
        <begin position="315"/>
        <end position="318"/>
    </location>
    <ligand>
        <name>GTP</name>
        <dbReference type="ChEBI" id="CHEBI:37565"/>
        <label>2</label>
    </ligand>
</feature>
<keyword id="KW-0342">GTP-binding</keyword>
<keyword id="KW-0547">Nucleotide-binding</keyword>
<keyword id="KW-0677">Repeat</keyword>
<keyword id="KW-0690">Ribosome biogenesis</keyword>
<organism>
    <name type="scientific">Campylobacter fetus subsp. fetus (strain 82-40)</name>
    <dbReference type="NCBI Taxonomy" id="360106"/>
    <lineage>
        <taxon>Bacteria</taxon>
        <taxon>Pseudomonadati</taxon>
        <taxon>Campylobacterota</taxon>
        <taxon>Epsilonproteobacteria</taxon>
        <taxon>Campylobacterales</taxon>
        <taxon>Campylobacteraceae</taxon>
        <taxon>Campylobacter</taxon>
    </lineage>
</organism>
<accession>A0RQK2</accession>
<comment type="function">
    <text evidence="1">GTPase that plays an essential role in the late steps of ribosome biogenesis.</text>
</comment>
<comment type="subunit">
    <text evidence="1">Associates with the 50S ribosomal subunit.</text>
</comment>
<comment type="similarity">
    <text evidence="1">Belongs to the TRAFAC class TrmE-Era-EngA-EngB-Septin-like GTPase superfamily. EngA (Der) GTPase family.</text>
</comment>
<sequence>MKKIILVGRPNVGKSSLFNRLAKQRIAITSDVSGTTRDTNKAEIFIDDKNCILIDSGGLDDSNELFKNVKINTLNEAKNADIIVFMVDGKNFPDEIDKRFFYELSNLNKPIALVVNKVDSKKDEERSWEFNEFGAKYIFNLSVSHNLGTDELRDWIYKLIPKSKIKADTSDDFDEFLDCVNEHGEMGLPSVDYETKNIKIGIIGRVNVGKSSLLNALVKEDRSVVSKIAGTTIDPVNESYVYEDRVFEFVDTAGIRKRGKIEGIERLALHRTEKILEEADIALLVLDASEPLTELDERIAGLGAKFELGLIIVLNKWDKDHGEFDKVVYELRDKFKFLAYAPIISVSALGGKRVHKLYPLILEVYKNYTQKMKTSRLNEVLEEAIRTHPIPRDHGKIVKIYYGVQFGFAPPKIALIMNKPRSLHFSYKRYLLNKLRENYELSGTPVILIPKNRSQKESTENEN</sequence>
<protein>
    <recommendedName>
        <fullName evidence="1">GTPase Der</fullName>
    </recommendedName>
    <alternativeName>
        <fullName evidence="1">GTP-binding protein EngA</fullName>
    </alternativeName>
</protein>
<gene>
    <name evidence="1" type="primary">der</name>
    <name type="synonym">engA</name>
    <name type="ordered locus">CFF8240_1339</name>
</gene>
<proteinExistence type="inferred from homology"/>
<name>DER_CAMFF</name>
<dbReference type="EMBL" id="CP000487">
    <property type="protein sequence ID" value="ABK82037.1"/>
    <property type="molecule type" value="Genomic_DNA"/>
</dbReference>
<dbReference type="RefSeq" id="WP_002850149.1">
    <property type="nucleotide sequence ID" value="NC_008599.1"/>
</dbReference>
<dbReference type="SMR" id="A0RQK2"/>
<dbReference type="GeneID" id="61065157"/>
<dbReference type="KEGG" id="cff:CFF8240_1339"/>
<dbReference type="eggNOG" id="COG1160">
    <property type="taxonomic scope" value="Bacteria"/>
</dbReference>
<dbReference type="HOGENOM" id="CLU_016077_6_2_7"/>
<dbReference type="Proteomes" id="UP000000760">
    <property type="component" value="Chromosome"/>
</dbReference>
<dbReference type="GO" id="GO:0005525">
    <property type="term" value="F:GTP binding"/>
    <property type="evidence" value="ECO:0007669"/>
    <property type="project" value="UniProtKB-UniRule"/>
</dbReference>
<dbReference type="GO" id="GO:0043022">
    <property type="term" value="F:ribosome binding"/>
    <property type="evidence" value="ECO:0007669"/>
    <property type="project" value="TreeGrafter"/>
</dbReference>
<dbReference type="GO" id="GO:0042254">
    <property type="term" value="P:ribosome biogenesis"/>
    <property type="evidence" value="ECO:0007669"/>
    <property type="project" value="UniProtKB-KW"/>
</dbReference>
<dbReference type="CDD" id="cd01894">
    <property type="entry name" value="EngA1"/>
    <property type="match status" value="1"/>
</dbReference>
<dbReference type="CDD" id="cd01895">
    <property type="entry name" value="EngA2"/>
    <property type="match status" value="1"/>
</dbReference>
<dbReference type="FunFam" id="3.30.300.20:FF:000004">
    <property type="entry name" value="GTPase Der"/>
    <property type="match status" value="1"/>
</dbReference>
<dbReference type="FunFam" id="3.40.50.300:FF:000494">
    <property type="entry name" value="tRNA modification GTPase MnmE"/>
    <property type="match status" value="1"/>
</dbReference>
<dbReference type="Gene3D" id="3.30.300.20">
    <property type="match status" value="1"/>
</dbReference>
<dbReference type="Gene3D" id="3.40.50.300">
    <property type="entry name" value="P-loop containing nucleotide triphosphate hydrolases"/>
    <property type="match status" value="2"/>
</dbReference>
<dbReference type="HAMAP" id="MF_00195">
    <property type="entry name" value="GTPase_Der"/>
    <property type="match status" value="1"/>
</dbReference>
<dbReference type="InterPro" id="IPR031166">
    <property type="entry name" value="G_ENGA"/>
</dbReference>
<dbReference type="InterPro" id="IPR006073">
    <property type="entry name" value="GTP-bd"/>
</dbReference>
<dbReference type="InterPro" id="IPR016484">
    <property type="entry name" value="GTPase_Der"/>
</dbReference>
<dbReference type="InterPro" id="IPR032859">
    <property type="entry name" value="KH_dom-like"/>
</dbReference>
<dbReference type="InterPro" id="IPR015946">
    <property type="entry name" value="KH_dom-like_a/b"/>
</dbReference>
<dbReference type="InterPro" id="IPR027417">
    <property type="entry name" value="P-loop_NTPase"/>
</dbReference>
<dbReference type="InterPro" id="IPR005225">
    <property type="entry name" value="Small_GTP-bd"/>
</dbReference>
<dbReference type="NCBIfam" id="TIGR03594">
    <property type="entry name" value="GTPase_EngA"/>
    <property type="match status" value="1"/>
</dbReference>
<dbReference type="NCBIfam" id="TIGR00231">
    <property type="entry name" value="small_GTP"/>
    <property type="match status" value="2"/>
</dbReference>
<dbReference type="PANTHER" id="PTHR43834">
    <property type="entry name" value="GTPASE DER"/>
    <property type="match status" value="1"/>
</dbReference>
<dbReference type="PANTHER" id="PTHR43834:SF6">
    <property type="entry name" value="GTPASE DER"/>
    <property type="match status" value="1"/>
</dbReference>
<dbReference type="Pfam" id="PF14714">
    <property type="entry name" value="KH_dom-like"/>
    <property type="match status" value="1"/>
</dbReference>
<dbReference type="Pfam" id="PF01926">
    <property type="entry name" value="MMR_HSR1"/>
    <property type="match status" value="2"/>
</dbReference>
<dbReference type="PIRSF" id="PIRSF006485">
    <property type="entry name" value="GTP-binding_EngA"/>
    <property type="match status" value="1"/>
</dbReference>
<dbReference type="PRINTS" id="PR00326">
    <property type="entry name" value="GTP1OBG"/>
</dbReference>
<dbReference type="SUPFAM" id="SSF52540">
    <property type="entry name" value="P-loop containing nucleoside triphosphate hydrolases"/>
    <property type="match status" value="2"/>
</dbReference>
<dbReference type="PROSITE" id="PS51712">
    <property type="entry name" value="G_ENGA"/>
    <property type="match status" value="2"/>
</dbReference>
<evidence type="ECO:0000255" key="1">
    <source>
        <dbReference type="HAMAP-Rule" id="MF_00195"/>
    </source>
</evidence>
<reference key="1">
    <citation type="submission" date="2006-11" db="EMBL/GenBank/DDBJ databases">
        <title>Sequence of Campylobacter fetus subsp. fetus 82-40.</title>
        <authorList>
            <person name="Fouts D.E."/>
            <person name="Nelson K.E."/>
        </authorList>
    </citation>
    <scope>NUCLEOTIDE SEQUENCE [LARGE SCALE GENOMIC DNA]</scope>
    <source>
        <strain>82-40</strain>
    </source>
</reference>